<evidence type="ECO:0000250" key="1">
    <source>
        <dbReference type="UniProtKB" id="P07258"/>
    </source>
</evidence>
<evidence type="ECO:0000255" key="2">
    <source>
        <dbReference type="PROSITE-ProRule" id="PRU00605"/>
    </source>
</evidence>
<evidence type="ECO:0000305" key="3"/>
<protein>
    <recommendedName>
        <fullName>Carbamoyl phosphate synthase arginine-specific small chain</fullName>
        <shortName>CPS</shortName>
        <shortName>CPSase</shortName>
        <ecNumber evidence="1">6.3.5.5</ecNumber>
    </recommendedName>
    <alternativeName>
        <fullName>Arginine-specific carbamoyl phosphate synthetase, glutamine chain</fullName>
    </alternativeName>
    <alternativeName>
        <fullName>Glutamine-dependent carbamoyl phosphate synthetase</fullName>
    </alternativeName>
</protein>
<gene>
    <name type="primary">CPA1</name>
    <name type="ordered locus">KLLA0F24882g</name>
</gene>
<keyword id="KW-0028">Amino-acid biosynthesis</keyword>
<keyword id="KW-0055">Arginine biosynthesis</keyword>
<keyword id="KW-0067">ATP-binding</keyword>
<keyword id="KW-0963">Cytoplasm</keyword>
<keyword id="KW-0315">Glutamine amidotransferase</keyword>
<keyword id="KW-0436">Ligase</keyword>
<keyword id="KW-0547">Nucleotide-binding</keyword>
<keyword id="KW-1185">Reference proteome</keyword>
<reference key="1">
    <citation type="journal article" date="2004" name="Nature">
        <title>Genome evolution in yeasts.</title>
        <authorList>
            <person name="Dujon B."/>
            <person name="Sherman D."/>
            <person name="Fischer G."/>
            <person name="Durrens P."/>
            <person name="Casaregola S."/>
            <person name="Lafontaine I."/>
            <person name="de Montigny J."/>
            <person name="Marck C."/>
            <person name="Neuveglise C."/>
            <person name="Talla E."/>
            <person name="Goffard N."/>
            <person name="Frangeul L."/>
            <person name="Aigle M."/>
            <person name="Anthouard V."/>
            <person name="Babour A."/>
            <person name="Barbe V."/>
            <person name="Barnay S."/>
            <person name="Blanchin S."/>
            <person name="Beckerich J.-M."/>
            <person name="Beyne E."/>
            <person name="Bleykasten C."/>
            <person name="Boisrame A."/>
            <person name="Boyer J."/>
            <person name="Cattolico L."/>
            <person name="Confanioleri F."/>
            <person name="de Daruvar A."/>
            <person name="Despons L."/>
            <person name="Fabre E."/>
            <person name="Fairhead C."/>
            <person name="Ferry-Dumazet H."/>
            <person name="Groppi A."/>
            <person name="Hantraye F."/>
            <person name="Hennequin C."/>
            <person name="Jauniaux N."/>
            <person name="Joyet P."/>
            <person name="Kachouri R."/>
            <person name="Kerrest A."/>
            <person name="Koszul R."/>
            <person name="Lemaire M."/>
            <person name="Lesur I."/>
            <person name="Ma L."/>
            <person name="Muller H."/>
            <person name="Nicaud J.-M."/>
            <person name="Nikolski M."/>
            <person name="Oztas S."/>
            <person name="Ozier-Kalogeropoulos O."/>
            <person name="Pellenz S."/>
            <person name="Potier S."/>
            <person name="Richard G.-F."/>
            <person name="Straub M.-L."/>
            <person name="Suleau A."/>
            <person name="Swennen D."/>
            <person name="Tekaia F."/>
            <person name="Wesolowski-Louvel M."/>
            <person name="Westhof E."/>
            <person name="Wirth B."/>
            <person name="Zeniou-Meyer M."/>
            <person name="Zivanovic Y."/>
            <person name="Bolotin-Fukuhara M."/>
            <person name="Thierry A."/>
            <person name="Bouchier C."/>
            <person name="Caudron B."/>
            <person name="Scarpelli C."/>
            <person name="Gaillardin C."/>
            <person name="Weissenbach J."/>
            <person name="Wincker P."/>
            <person name="Souciet J.-L."/>
        </authorList>
    </citation>
    <scope>NUCLEOTIDE SEQUENCE [LARGE SCALE GENOMIC DNA]</scope>
    <source>
        <strain>ATCC 8585 / CBS 2359 / DSM 70799 / NBRC 1267 / NRRL Y-1140 / WM37</strain>
    </source>
</reference>
<sequence length="409" mass="44921">MPNFKSTAPKAKFAIYNNSNPDSESGFVEFQGYSFGAPVSCSGEAVFTTSLVGYPESMTDPSYKGQILVFTQPLIGNYGVPSGEERDDFNLLKYLESPHIHVRGIVVAEYAWRYSHWTAVESLATWCQRENVTAIGGIDTRAVVQILREQGSSPSTITVQGSFIPKPIKPETDLVKIVSTKKPFFVKALSSVKTPFNVALIDCGVKENIIRCLVERGANVTVFPYDYPITSVANQFDGIFISNGPGDPVQCMESTVPELKKLLETNTLQDLPIFGICLGHQLLALASGGKTIKLGYGNRAHNIPALDLTTGQCHITSQNHGYAVDVDTLPESGFKPFFQNLNDKSNEGMIHVSRPIFSTQFHPEAKGGPRDSAVLFDRYFDNMSQYRALKGPKVKLTLNTSSLATERVF</sequence>
<feature type="chain" id="PRO_0000290596" description="Carbamoyl phosphate synthase arginine-specific small chain">
    <location>
        <begin position="1"/>
        <end position="409"/>
    </location>
</feature>
<feature type="domain" description="Glutamine amidotransferase type-1" evidence="2">
    <location>
        <begin position="197"/>
        <end position="389"/>
    </location>
</feature>
<feature type="active site" description="Nucleophile" evidence="2">
    <location>
        <position position="277"/>
    </location>
</feature>
<feature type="active site" evidence="2">
    <location>
        <position position="362"/>
    </location>
</feature>
<feature type="active site" evidence="2">
    <location>
        <position position="364"/>
    </location>
</feature>
<comment type="function">
    <text evidence="1">Small subunit of the arginine-specific carbamoyl phosphate synthase (CPSase). CPSase catalyzes the formation of carbamoyl phosphate from the ammonia moiety of glutamine, carbonate, and phosphate donated by ATP, constituting the first step of 2 biosynthetic pathways, one leading to arginine and/or urea and the other to pyrimidine nucleotides. The small subunit (glutamine amidotransferase) binds and cleaves glutamine to supply the large subunit with the substrate ammonia.</text>
</comment>
<comment type="catalytic activity">
    <reaction evidence="1">
        <text>hydrogencarbonate + L-glutamine + 2 ATP + H2O = carbamoyl phosphate + L-glutamate + 2 ADP + phosphate + 2 H(+)</text>
        <dbReference type="Rhea" id="RHEA:18633"/>
        <dbReference type="ChEBI" id="CHEBI:15377"/>
        <dbReference type="ChEBI" id="CHEBI:15378"/>
        <dbReference type="ChEBI" id="CHEBI:17544"/>
        <dbReference type="ChEBI" id="CHEBI:29985"/>
        <dbReference type="ChEBI" id="CHEBI:30616"/>
        <dbReference type="ChEBI" id="CHEBI:43474"/>
        <dbReference type="ChEBI" id="CHEBI:58228"/>
        <dbReference type="ChEBI" id="CHEBI:58359"/>
        <dbReference type="ChEBI" id="CHEBI:456216"/>
        <dbReference type="EC" id="6.3.5.5"/>
    </reaction>
</comment>
<comment type="catalytic activity">
    <molecule>Carbamoyl phosphate synthase arginine-specific small chain</molecule>
    <reaction evidence="1">
        <text>L-glutamine + H2O = L-glutamate + NH4(+)</text>
        <dbReference type="Rhea" id="RHEA:15889"/>
        <dbReference type="ChEBI" id="CHEBI:15377"/>
        <dbReference type="ChEBI" id="CHEBI:28938"/>
        <dbReference type="ChEBI" id="CHEBI:29985"/>
        <dbReference type="ChEBI" id="CHEBI:58359"/>
    </reaction>
</comment>
<comment type="pathway">
    <text evidence="1">Amino-acid biosynthesis; L-arginine biosynthesis; carbamoyl phosphate from bicarbonate: step 1/1.</text>
</comment>
<comment type="subunit">
    <text evidence="1">Heterodimer composed of 2 chains; the small (or glutamine) chain promotes the hydrolysis of glutamine to ammonia, which is used by the large (or ammonia) chain to synthesize carbamoyl phosphate.</text>
</comment>
<comment type="subcellular location">
    <subcellularLocation>
        <location evidence="1">Cytoplasm</location>
    </subcellularLocation>
</comment>
<comment type="similarity">
    <text evidence="3">Belongs to the CarA family.</text>
</comment>
<dbReference type="EC" id="6.3.5.5" evidence="1"/>
<dbReference type="EMBL" id="CR382126">
    <property type="protein sequence ID" value="CAG98896.1"/>
    <property type="molecule type" value="Genomic_DNA"/>
</dbReference>
<dbReference type="RefSeq" id="XP_456188.1">
    <property type="nucleotide sequence ID" value="XM_456188.1"/>
</dbReference>
<dbReference type="SMR" id="Q6CIQ1"/>
<dbReference type="FunCoup" id="Q6CIQ1">
    <property type="interactions" value="393"/>
</dbReference>
<dbReference type="STRING" id="284590.Q6CIQ1"/>
<dbReference type="PaxDb" id="284590-Q6CIQ1"/>
<dbReference type="KEGG" id="kla:KLLA0_F24882g"/>
<dbReference type="eggNOG" id="KOG0370">
    <property type="taxonomic scope" value="Eukaryota"/>
</dbReference>
<dbReference type="HOGENOM" id="CLU_035901_1_1_1"/>
<dbReference type="InParanoid" id="Q6CIQ1"/>
<dbReference type="OMA" id="CFSVQYH"/>
<dbReference type="UniPathway" id="UPA00068">
    <property type="reaction ID" value="UER00171"/>
</dbReference>
<dbReference type="Proteomes" id="UP000000598">
    <property type="component" value="Chromosome F"/>
</dbReference>
<dbReference type="GO" id="GO:0005737">
    <property type="term" value="C:cytoplasm"/>
    <property type="evidence" value="ECO:0007669"/>
    <property type="project" value="UniProtKB-SubCell"/>
</dbReference>
<dbReference type="GO" id="GO:0005524">
    <property type="term" value="F:ATP binding"/>
    <property type="evidence" value="ECO:0007669"/>
    <property type="project" value="UniProtKB-KW"/>
</dbReference>
<dbReference type="GO" id="GO:0004088">
    <property type="term" value="F:carbamoyl-phosphate synthase (glutamine-hydrolyzing) activity"/>
    <property type="evidence" value="ECO:0007669"/>
    <property type="project" value="UniProtKB-EC"/>
</dbReference>
<dbReference type="GO" id="GO:0004359">
    <property type="term" value="F:glutaminase activity"/>
    <property type="evidence" value="ECO:0007669"/>
    <property type="project" value="RHEA"/>
</dbReference>
<dbReference type="GO" id="GO:0006207">
    <property type="term" value="P:'de novo' pyrimidine nucleobase biosynthetic process"/>
    <property type="evidence" value="ECO:0007669"/>
    <property type="project" value="InterPro"/>
</dbReference>
<dbReference type="GO" id="GO:0006541">
    <property type="term" value="P:glutamine metabolic process"/>
    <property type="evidence" value="ECO:0007669"/>
    <property type="project" value="InterPro"/>
</dbReference>
<dbReference type="GO" id="GO:0006526">
    <property type="term" value="P:L-arginine biosynthetic process"/>
    <property type="evidence" value="ECO:0007669"/>
    <property type="project" value="UniProtKB-UniPathway"/>
</dbReference>
<dbReference type="CDD" id="cd01744">
    <property type="entry name" value="GATase1_CPSase"/>
    <property type="match status" value="1"/>
</dbReference>
<dbReference type="FunFam" id="3.40.50.880:FF:000016">
    <property type="entry name" value="Carbamoyl-phosphate synthase arginine-specific small chain"/>
    <property type="match status" value="1"/>
</dbReference>
<dbReference type="FunFam" id="3.50.30.20:FF:000003">
    <property type="entry name" value="Carbamoyl-phosphate synthase arginine-specific small chain"/>
    <property type="match status" value="1"/>
</dbReference>
<dbReference type="Gene3D" id="3.40.50.880">
    <property type="match status" value="1"/>
</dbReference>
<dbReference type="Gene3D" id="3.50.30.20">
    <property type="entry name" value="Carbamoyl-phosphate synthase small subunit, N-terminal domain"/>
    <property type="match status" value="1"/>
</dbReference>
<dbReference type="HAMAP" id="MF_01209">
    <property type="entry name" value="CPSase_S_chain"/>
    <property type="match status" value="1"/>
</dbReference>
<dbReference type="InterPro" id="IPR050472">
    <property type="entry name" value="Anth_synth/Amidotransfase"/>
</dbReference>
<dbReference type="InterPro" id="IPR006274">
    <property type="entry name" value="CarbamoylP_synth_ssu"/>
</dbReference>
<dbReference type="InterPro" id="IPR002474">
    <property type="entry name" value="CarbamoylP_synth_ssu_N"/>
</dbReference>
<dbReference type="InterPro" id="IPR036480">
    <property type="entry name" value="CarbP_synth_ssu_N_sf"/>
</dbReference>
<dbReference type="InterPro" id="IPR029062">
    <property type="entry name" value="Class_I_gatase-like"/>
</dbReference>
<dbReference type="InterPro" id="IPR035686">
    <property type="entry name" value="CPSase_GATase1"/>
</dbReference>
<dbReference type="InterPro" id="IPR017926">
    <property type="entry name" value="GATASE"/>
</dbReference>
<dbReference type="NCBIfam" id="TIGR01368">
    <property type="entry name" value="CPSaseIIsmall"/>
    <property type="match status" value="1"/>
</dbReference>
<dbReference type="NCBIfam" id="NF009475">
    <property type="entry name" value="PRK12838.1"/>
    <property type="match status" value="1"/>
</dbReference>
<dbReference type="PANTHER" id="PTHR43418:SF7">
    <property type="entry name" value="CARBAMOYL-PHOSPHATE SYNTHASE SMALL CHAIN"/>
    <property type="match status" value="1"/>
</dbReference>
<dbReference type="PANTHER" id="PTHR43418">
    <property type="entry name" value="MULTIFUNCTIONAL TRYPTOPHAN BIOSYNTHESIS PROTEIN-RELATED"/>
    <property type="match status" value="1"/>
</dbReference>
<dbReference type="Pfam" id="PF00988">
    <property type="entry name" value="CPSase_sm_chain"/>
    <property type="match status" value="1"/>
</dbReference>
<dbReference type="Pfam" id="PF00117">
    <property type="entry name" value="GATase"/>
    <property type="match status" value="1"/>
</dbReference>
<dbReference type="PRINTS" id="PR00099">
    <property type="entry name" value="CPSGATASE"/>
</dbReference>
<dbReference type="PRINTS" id="PR00096">
    <property type="entry name" value="GATASE"/>
</dbReference>
<dbReference type="SMART" id="SM01097">
    <property type="entry name" value="CPSase_sm_chain"/>
    <property type="match status" value="1"/>
</dbReference>
<dbReference type="SUPFAM" id="SSF52021">
    <property type="entry name" value="Carbamoyl phosphate synthetase, small subunit N-terminal domain"/>
    <property type="match status" value="1"/>
</dbReference>
<dbReference type="SUPFAM" id="SSF52317">
    <property type="entry name" value="Class I glutamine amidotransferase-like"/>
    <property type="match status" value="1"/>
</dbReference>
<dbReference type="PROSITE" id="PS51273">
    <property type="entry name" value="GATASE_TYPE_1"/>
    <property type="match status" value="1"/>
</dbReference>
<organism>
    <name type="scientific">Kluyveromyces lactis (strain ATCC 8585 / CBS 2359 / DSM 70799 / NBRC 1267 / NRRL Y-1140 / WM37)</name>
    <name type="common">Yeast</name>
    <name type="synonym">Candida sphaerica</name>
    <dbReference type="NCBI Taxonomy" id="284590"/>
    <lineage>
        <taxon>Eukaryota</taxon>
        <taxon>Fungi</taxon>
        <taxon>Dikarya</taxon>
        <taxon>Ascomycota</taxon>
        <taxon>Saccharomycotina</taxon>
        <taxon>Saccharomycetes</taxon>
        <taxon>Saccharomycetales</taxon>
        <taxon>Saccharomycetaceae</taxon>
        <taxon>Kluyveromyces</taxon>
    </lineage>
</organism>
<accession>Q6CIQ1</accession>
<name>CARA_KLULA</name>
<proteinExistence type="inferred from homology"/>